<gene>
    <name type="ordered locus">TTE0897</name>
</gene>
<evidence type="ECO:0000255" key="1">
    <source>
        <dbReference type="PROSITE-ProRule" id="PRU01182"/>
    </source>
</evidence>
<evidence type="ECO:0000305" key="2"/>
<keyword id="KW-0378">Hydrolase</keyword>
<keyword id="KW-0479">Metal-binding</keyword>
<keyword id="KW-0482">Metalloprotease</keyword>
<keyword id="KW-0645">Protease</keyword>
<keyword id="KW-1185">Reference proteome</keyword>
<keyword id="KW-0862">Zinc</keyword>
<sequence>MGEDLNIRIKDLPYEERPRERLIKYGPQVLSNAELIAIIIGTGSRRENAISLAQKLITEERGLKFIVNSSVEKLANIRGIGIAKAVKLKAAVELGRRLMLSTQGENFSVTSPEDVINLLMEEMRYLSKEHFKVVMLNVKNKIIAIETISIGSLNTSIVHPREVFKAAIERSASSIILVHNHPSGDPTPSREDVEVTKRLVEAGNILGIKVLDHVIIGDGRGISLKEKGYYDFE</sequence>
<accession>Q8RBC5</accession>
<reference key="1">
    <citation type="journal article" date="2002" name="Genome Res.">
        <title>A complete sequence of the T. tengcongensis genome.</title>
        <authorList>
            <person name="Bao Q."/>
            <person name="Tian Y."/>
            <person name="Li W."/>
            <person name="Xu Z."/>
            <person name="Xuan Z."/>
            <person name="Hu S."/>
            <person name="Dong W."/>
            <person name="Yang J."/>
            <person name="Chen Y."/>
            <person name="Xue Y."/>
            <person name="Xu Y."/>
            <person name="Lai X."/>
            <person name="Huang L."/>
            <person name="Dong X."/>
            <person name="Ma Y."/>
            <person name="Ling L."/>
            <person name="Tan H."/>
            <person name="Chen R."/>
            <person name="Wang J."/>
            <person name="Yu J."/>
            <person name="Yang H."/>
        </authorList>
    </citation>
    <scope>NUCLEOTIDE SEQUENCE [LARGE SCALE GENOMIC DNA]</scope>
    <source>
        <strain>DSM 15242 / JCM 11007 / NBRC 100824 / MB4</strain>
    </source>
</reference>
<protein>
    <recommendedName>
        <fullName>UPF0758 protein TTE0897</fullName>
    </recommendedName>
</protein>
<name>Y897_CALS4</name>
<comment type="similarity">
    <text evidence="2">Belongs to the UPF0758 family.</text>
</comment>
<proteinExistence type="inferred from homology"/>
<dbReference type="EMBL" id="AE008691">
    <property type="protein sequence ID" value="AAM24153.1"/>
    <property type="molecule type" value="Genomic_DNA"/>
</dbReference>
<dbReference type="SMR" id="Q8RBC5"/>
<dbReference type="STRING" id="273068.TTE0897"/>
<dbReference type="KEGG" id="tte:TTE0897"/>
<dbReference type="eggNOG" id="COG2003">
    <property type="taxonomic scope" value="Bacteria"/>
</dbReference>
<dbReference type="HOGENOM" id="CLU_073529_0_2_9"/>
<dbReference type="OrthoDB" id="9804482at2"/>
<dbReference type="Proteomes" id="UP000000555">
    <property type="component" value="Chromosome"/>
</dbReference>
<dbReference type="GO" id="GO:0046872">
    <property type="term" value="F:metal ion binding"/>
    <property type="evidence" value="ECO:0007669"/>
    <property type="project" value="UniProtKB-KW"/>
</dbReference>
<dbReference type="GO" id="GO:0008237">
    <property type="term" value="F:metallopeptidase activity"/>
    <property type="evidence" value="ECO:0007669"/>
    <property type="project" value="UniProtKB-KW"/>
</dbReference>
<dbReference type="GO" id="GO:0006508">
    <property type="term" value="P:proteolysis"/>
    <property type="evidence" value="ECO:0007669"/>
    <property type="project" value="UniProtKB-KW"/>
</dbReference>
<dbReference type="CDD" id="cd08071">
    <property type="entry name" value="MPN_DUF2466"/>
    <property type="match status" value="1"/>
</dbReference>
<dbReference type="Gene3D" id="3.40.140.10">
    <property type="entry name" value="Cytidine Deaminase, domain 2"/>
    <property type="match status" value="1"/>
</dbReference>
<dbReference type="InterPro" id="IPR037518">
    <property type="entry name" value="MPN"/>
</dbReference>
<dbReference type="InterPro" id="IPR025657">
    <property type="entry name" value="RadC_JAB"/>
</dbReference>
<dbReference type="InterPro" id="IPR010994">
    <property type="entry name" value="RuvA_2-like"/>
</dbReference>
<dbReference type="InterPro" id="IPR001405">
    <property type="entry name" value="UPF0758"/>
</dbReference>
<dbReference type="InterPro" id="IPR020891">
    <property type="entry name" value="UPF0758_CS"/>
</dbReference>
<dbReference type="InterPro" id="IPR046778">
    <property type="entry name" value="UPF0758_N"/>
</dbReference>
<dbReference type="NCBIfam" id="NF000642">
    <property type="entry name" value="PRK00024.1"/>
    <property type="match status" value="1"/>
</dbReference>
<dbReference type="NCBIfam" id="TIGR00608">
    <property type="entry name" value="radc"/>
    <property type="match status" value="1"/>
</dbReference>
<dbReference type="PANTHER" id="PTHR30471">
    <property type="entry name" value="DNA REPAIR PROTEIN RADC"/>
    <property type="match status" value="1"/>
</dbReference>
<dbReference type="PANTHER" id="PTHR30471:SF3">
    <property type="entry name" value="UPF0758 PROTEIN YEES-RELATED"/>
    <property type="match status" value="1"/>
</dbReference>
<dbReference type="Pfam" id="PF04002">
    <property type="entry name" value="RadC"/>
    <property type="match status" value="1"/>
</dbReference>
<dbReference type="Pfam" id="PF20582">
    <property type="entry name" value="UPF0758_N"/>
    <property type="match status" value="1"/>
</dbReference>
<dbReference type="SUPFAM" id="SSF102712">
    <property type="entry name" value="JAB1/MPN domain"/>
    <property type="match status" value="1"/>
</dbReference>
<dbReference type="SUPFAM" id="SSF47781">
    <property type="entry name" value="RuvA domain 2-like"/>
    <property type="match status" value="1"/>
</dbReference>
<dbReference type="PROSITE" id="PS50249">
    <property type="entry name" value="MPN"/>
    <property type="match status" value="1"/>
</dbReference>
<dbReference type="PROSITE" id="PS01302">
    <property type="entry name" value="UPF0758"/>
    <property type="match status" value="1"/>
</dbReference>
<feature type="chain" id="PRO_0000190748" description="UPF0758 protein TTE0897">
    <location>
        <begin position="1"/>
        <end position="233"/>
    </location>
</feature>
<feature type="domain" description="MPN" evidence="1">
    <location>
        <begin position="108"/>
        <end position="230"/>
    </location>
</feature>
<feature type="short sequence motif" description="JAMM motif" evidence="1">
    <location>
        <begin position="179"/>
        <end position="192"/>
    </location>
</feature>
<feature type="binding site" evidence="1">
    <location>
        <position position="179"/>
    </location>
    <ligand>
        <name>Zn(2+)</name>
        <dbReference type="ChEBI" id="CHEBI:29105"/>
        <note>catalytic</note>
    </ligand>
</feature>
<feature type="binding site" evidence="1">
    <location>
        <position position="181"/>
    </location>
    <ligand>
        <name>Zn(2+)</name>
        <dbReference type="ChEBI" id="CHEBI:29105"/>
        <note>catalytic</note>
    </ligand>
</feature>
<feature type="binding site" evidence="1">
    <location>
        <position position="192"/>
    </location>
    <ligand>
        <name>Zn(2+)</name>
        <dbReference type="ChEBI" id="CHEBI:29105"/>
        <note>catalytic</note>
    </ligand>
</feature>
<organism>
    <name type="scientific">Caldanaerobacter subterraneus subsp. tengcongensis (strain DSM 15242 / JCM 11007 / NBRC 100824 / MB4)</name>
    <name type="common">Thermoanaerobacter tengcongensis</name>
    <dbReference type="NCBI Taxonomy" id="273068"/>
    <lineage>
        <taxon>Bacteria</taxon>
        <taxon>Bacillati</taxon>
        <taxon>Bacillota</taxon>
        <taxon>Clostridia</taxon>
        <taxon>Thermoanaerobacterales</taxon>
        <taxon>Thermoanaerobacteraceae</taxon>
        <taxon>Caldanaerobacter</taxon>
    </lineage>
</organism>